<name>DAPF_CALS4</name>
<comment type="function">
    <text evidence="1">Catalyzes the stereoinversion of LL-2,6-diaminopimelate (L,L-DAP) to meso-diaminopimelate (meso-DAP), a precursor of L-lysine and an essential component of the bacterial peptidoglycan.</text>
</comment>
<comment type="catalytic activity">
    <reaction evidence="1">
        <text>(2S,6S)-2,6-diaminopimelate = meso-2,6-diaminopimelate</text>
        <dbReference type="Rhea" id="RHEA:15393"/>
        <dbReference type="ChEBI" id="CHEBI:57609"/>
        <dbReference type="ChEBI" id="CHEBI:57791"/>
        <dbReference type="EC" id="5.1.1.7"/>
    </reaction>
</comment>
<comment type="pathway">
    <text evidence="1">Amino-acid biosynthesis; L-lysine biosynthesis via DAP pathway; DL-2,6-diaminopimelate from LL-2,6-diaminopimelate: step 1/1.</text>
</comment>
<comment type="subunit">
    <text evidence="1">Homodimer.</text>
</comment>
<comment type="subcellular location">
    <subcellularLocation>
        <location evidence="1">Cytoplasm</location>
    </subcellularLocation>
</comment>
<comment type="similarity">
    <text evidence="1">Belongs to the diaminopimelate epimerase family.</text>
</comment>
<sequence length="274" mass="30259">MRFTKMHGLGNDFIVIEAVEGVDYSELAVKLCDRHFGIGADGLLVVEPSHIADIKMRIFNADGSEAEMCGNGSRCFAKYVYEKGIVSKQKMTVETLAGVIMPELFVENGKIKSVKVYMGSPIFESSKIPVKSEKQKFIDEPVKIDGKTYRLSSVRVGVPHTILFVSSFEESFMKELGPKIEKSSLFPEGTNVDFVKVEDEENISVRTWERGVGLTLACGSGASASAVVSSLLGRTRRSVNVHFKAGVLLVEWKEDNSIYLSGEVEEVFRGEIEI</sequence>
<accession>Q8R9S4</accession>
<organism>
    <name type="scientific">Caldanaerobacter subterraneus subsp. tengcongensis (strain DSM 15242 / JCM 11007 / NBRC 100824 / MB4)</name>
    <name type="common">Thermoanaerobacter tengcongensis</name>
    <dbReference type="NCBI Taxonomy" id="273068"/>
    <lineage>
        <taxon>Bacteria</taxon>
        <taxon>Bacillati</taxon>
        <taxon>Bacillota</taxon>
        <taxon>Clostridia</taxon>
        <taxon>Thermoanaerobacterales</taxon>
        <taxon>Thermoanaerobacteraceae</taxon>
        <taxon>Caldanaerobacter</taxon>
    </lineage>
</organism>
<evidence type="ECO:0000255" key="1">
    <source>
        <dbReference type="HAMAP-Rule" id="MF_00197"/>
    </source>
</evidence>
<feature type="chain" id="PRO_0000149874" description="Diaminopimelate epimerase">
    <location>
        <begin position="1"/>
        <end position="274"/>
    </location>
</feature>
<feature type="active site" description="Proton donor" evidence="1">
    <location>
        <position position="69"/>
    </location>
</feature>
<feature type="active site" description="Proton acceptor" evidence="1">
    <location>
        <position position="218"/>
    </location>
</feature>
<feature type="binding site" evidence="1">
    <location>
        <position position="11"/>
    </location>
    <ligand>
        <name>substrate</name>
    </ligand>
</feature>
<feature type="binding site" evidence="1">
    <location>
        <position position="60"/>
    </location>
    <ligand>
        <name>substrate</name>
    </ligand>
</feature>
<feature type="binding site" evidence="1">
    <location>
        <begin position="70"/>
        <end position="71"/>
    </location>
    <ligand>
        <name>substrate</name>
    </ligand>
</feature>
<feature type="binding site" evidence="1">
    <location>
        <position position="191"/>
    </location>
    <ligand>
        <name>substrate</name>
    </ligand>
</feature>
<feature type="binding site" evidence="1">
    <location>
        <begin position="209"/>
        <end position="210"/>
    </location>
    <ligand>
        <name>substrate</name>
    </ligand>
</feature>
<feature type="binding site" evidence="1">
    <location>
        <begin position="219"/>
        <end position="220"/>
    </location>
    <ligand>
        <name>substrate</name>
    </ligand>
</feature>
<feature type="site" description="Could be important to modulate the pK values of the two catalytic cysteine residues" evidence="1">
    <location>
        <position position="160"/>
    </location>
</feature>
<feature type="site" description="Could be important to modulate the pK values of the two catalytic cysteine residues" evidence="1">
    <location>
        <position position="209"/>
    </location>
</feature>
<gene>
    <name evidence="1" type="primary">dapF</name>
    <name type="ordered locus">TTE1514</name>
</gene>
<dbReference type="EC" id="5.1.1.7" evidence="1"/>
<dbReference type="EMBL" id="AE008691">
    <property type="protein sequence ID" value="AAM24731.1"/>
    <property type="molecule type" value="Genomic_DNA"/>
</dbReference>
<dbReference type="RefSeq" id="WP_011025770.1">
    <property type="nucleotide sequence ID" value="NC_003869.1"/>
</dbReference>
<dbReference type="SMR" id="Q8R9S4"/>
<dbReference type="STRING" id="273068.TTE1514"/>
<dbReference type="KEGG" id="tte:TTE1514"/>
<dbReference type="eggNOG" id="COG0253">
    <property type="taxonomic scope" value="Bacteria"/>
</dbReference>
<dbReference type="HOGENOM" id="CLU_053306_3_0_9"/>
<dbReference type="OrthoDB" id="9805408at2"/>
<dbReference type="UniPathway" id="UPA00034">
    <property type="reaction ID" value="UER00025"/>
</dbReference>
<dbReference type="Proteomes" id="UP000000555">
    <property type="component" value="Chromosome"/>
</dbReference>
<dbReference type="GO" id="GO:0005829">
    <property type="term" value="C:cytosol"/>
    <property type="evidence" value="ECO:0007669"/>
    <property type="project" value="TreeGrafter"/>
</dbReference>
<dbReference type="GO" id="GO:0008837">
    <property type="term" value="F:diaminopimelate epimerase activity"/>
    <property type="evidence" value="ECO:0007669"/>
    <property type="project" value="UniProtKB-UniRule"/>
</dbReference>
<dbReference type="GO" id="GO:0009089">
    <property type="term" value="P:lysine biosynthetic process via diaminopimelate"/>
    <property type="evidence" value="ECO:0007669"/>
    <property type="project" value="UniProtKB-UniRule"/>
</dbReference>
<dbReference type="FunFam" id="3.10.310.10:FF:000001">
    <property type="entry name" value="Diaminopimelate epimerase"/>
    <property type="match status" value="1"/>
</dbReference>
<dbReference type="Gene3D" id="3.10.310.10">
    <property type="entry name" value="Diaminopimelate Epimerase, Chain A, domain 1"/>
    <property type="match status" value="2"/>
</dbReference>
<dbReference type="HAMAP" id="MF_00197">
    <property type="entry name" value="DAP_epimerase"/>
    <property type="match status" value="1"/>
</dbReference>
<dbReference type="InterPro" id="IPR018510">
    <property type="entry name" value="DAP_epimerase_AS"/>
</dbReference>
<dbReference type="InterPro" id="IPR001653">
    <property type="entry name" value="DAP_epimerase_DapF"/>
</dbReference>
<dbReference type="NCBIfam" id="TIGR00652">
    <property type="entry name" value="DapF"/>
    <property type="match status" value="1"/>
</dbReference>
<dbReference type="PANTHER" id="PTHR31689:SF0">
    <property type="entry name" value="DIAMINOPIMELATE EPIMERASE"/>
    <property type="match status" value="1"/>
</dbReference>
<dbReference type="PANTHER" id="PTHR31689">
    <property type="entry name" value="DIAMINOPIMELATE EPIMERASE, CHLOROPLASTIC"/>
    <property type="match status" value="1"/>
</dbReference>
<dbReference type="Pfam" id="PF01678">
    <property type="entry name" value="DAP_epimerase"/>
    <property type="match status" value="2"/>
</dbReference>
<dbReference type="SUPFAM" id="SSF54506">
    <property type="entry name" value="Diaminopimelate epimerase-like"/>
    <property type="match status" value="1"/>
</dbReference>
<dbReference type="PROSITE" id="PS01326">
    <property type="entry name" value="DAP_EPIMERASE"/>
    <property type="match status" value="1"/>
</dbReference>
<keyword id="KW-0028">Amino-acid biosynthesis</keyword>
<keyword id="KW-0963">Cytoplasm</keyword>
<keyword id="KW-0413">Isomerase</keyword>
<keyword id="KW-0457">Lysine biosynthesis</keyword>
<keyword id="KW-1185">Reference proteome</keyword>
<reference key="1">
    <citation type="journal article" date="2002" name="Genome Res.">
        <title>A complete sequence of the T. tengcongensis genome.</title>
        <authorList>
            <person name="Bao Q."/>
            <person name="Tian Y."/>
            <person name="Li W."/>
            <person name="Xu Z."/>
            <person name="Xuan Z."/>
            <person name="Hu S."/>
            <person name="Dong W."/>
            <person name="Yang J."/>
            <person name="Chen Y."/>
            <person name="Xue Y."/>
            <person name="Xu Y."/>
            <person name="Lai X."/>
            <person name="Huang L."/>
            <person name="Dong X."/>
            <person name="Ma Y."/>
            <person name="Ling L."/>
            <person name="Tan H."/>
            <person name="Chen R."/>
            <person name="Wang J."/>
            <person name="Yu J."/>
            <person name="Yang H."/>
        </authorList>
    </citation>
    <scope>NUCLEOTIDE SEQUENCE [LARGE SCALE GENOMIC DNA]</scope>
    <source>
        <strain>DSM 15242 / JCM 11007 / NBRC 100824 / MB4</strain>
    </source>
</reference>
<protein>
    <recommendedName>
        <fullName evidence="1">Diaminopimelate epimerase</fullName>
        <shortName evidence="1">DAP epimerase</shortName>
        <ecNumber evidence="1">5.1.1.7</ecNumber>
    </recommendedName>
    <alternativeName>
        <fullName evidence="1">PLP-independent amino acid racemase</fullName>
    </alternativeName>
</protein>
<proteinExistence type="inferred from homology"/>